<dbReference type="EC" id="6.3.2.4" evidence="2"/>
<dbReference type="EMBL" id="CP000668">
    <property type="protein sequence ID" value="ABP41443.1"/>
    <property type="molecule type" value="Genomic_DNA"/>
</dbReference>
<dbReference type="RefSeq" id="WP_002210432.1">
    <property type="nucleotide sequence ID" value="NZ_CP009715.1"/>
</dbReference>
<dbReference type="SMR" id="A4TQ81"/>
<dbReference type="KEGG" id="ypp:YPDSF_3085"/>
<dbReference type="PATRIC" id="fig|386656.14.peg.1275"/>
<dbReference type="UniPathway" id="UPA00219"/>
<dbReference type="GO" id="GO:0005829">
    <property type="term" value="C:cytosol"/>
    <property type="evidence" value="ECO:0007669"/>
    <property type="project" value="TreeGrafter"/>
</dbReference>
<dbReference type="GO" id="GO:0005524">
    <property type="term" value="F:ATP binding"/>
    <property type="evidence" value="ECO:0007669"/>
    <property type="project" value="UniProtKB-KW"/>
</dbReference>
<dbReference type="GO" id="GO:0008716">
    <property type="term" value="F:D-alanine-D-alanine ligase activity"/>
    <property type="evidence" value="ECO:0007669"/>
    <property type="project" value="UniProtKB-UniRule"/>
</dbReference>
<dbReference type="GO" id="GO:0046872">
    <property type="term" value="F:metal ion binding"/>
    <property type="evidence" value="ECO:0007669"/>
    <property type="project" value="UniProtKB-KW"/>
</dbReference>
<dbReference type="GO" id="GO:0071555">
    <property type="term" value="P:cell wall organization"/>
    <property type="evidence" value="ECO:0007669"/>
    <property type="project" value="UniProtKB-KW"/>
</dbReference>
<dbReference type="GO" id="GO:0009252">
    <property type="term" value="P:peptidoglycan biosynthetic process"/>
    <property type="evidence" value="ECO:0007669"/>
    <property type="project" value="UniProtKB-UniRule"/>
</dbReference>
<dbReference type="GO" id="GO:0008360">
    <property type="term" value="P:regulation of cell shape"/>
    <property type="evidence" value="ECO:0007669"/>
    <property type="project" value="UniProtKB-KW"/>
</dbReference>
<dbReference type="FunFam" id="3.30.1490.20:FF:000007">
    <property type="entry name" value="D-alanine--D-alanine ligase"/>
    <property type="match status" value="1"/>
</dbReference>
<dbReference type="FunFam" id="3.30.470.20:FF:000008">
    <property type="entry name" value="D-alanine--D-alanine ligase"/>
    <property type="match status" value="1"/>
</dbReference>
<dbReference type="FunFam" id="3.40.50.20:FF:000013">
    <property type="entry name" value="D-alanine--D-alanine ligase"/>
    <property type="match status" value="1"/>
</dbReference>
<dbReference type="Gene3D" id="3.40.50.20">
    <property type="match status" value="1"/>
</dbReference>
<dbReference type="Gene3D" id="3.30.1490.20">
    <property type="entry name" value="ATP-grasp fold, A domain"/>
    <property type="match status" value="1"/>
</dbReference>
<dbReference type="Gene3D" id="3.30.470.20">
    <property type="entry name" value="ATP-grasp fold, B domain"/>
    <property type="match status" value="1"/>
</dbReference>
<dbReference type="HAMAP" id="MF_00047">
    <property type="entry name" value="Dala_Dala_lig"/>
    <property type="match status" value="1"/>
</dbReference>
<dbReference type="InterPro" id="IPR011761">
    <property type="entry name" value="ATP-grasp"/>
</dbReference>
<dbReference type="InterPro" id="IPR013815">
    <property type="entry name" value="ATP_grasp_subdomain_1"/>
</dbReference>
<dbReference type="InterPro" id="IPR000291">
    <property type="entry name" value="D-Ala_lig_Van_CS"/>
</dbReference>
<dbReference type="InterPro" id="IPR005905">
    <property type="entry name" value="D_ala_D_ala"/>
</dbReference>
<dbReference type="InterPro" id="IPR011095">
    <property type="entry name" value="Dala_Dala_lig_C"/>
</dbReference>
<dbReference type="InterPro" id="IPR011127">
    <property type="entry name" value="Dala_Dala_lig_N"/>
</dbReference>
<dbReference type="InterPro" id="IPR016185">
    <property type="entry name" value="PreATP-grasp_dom_sf"/>
</dbReference>
<dbReference type="NCBIfam" id="TIGR01205">
    <property type="entry name" value="D_ala_D_alaTIGR"/>
    <property type="match status" value="1"/>
</dbReference>
<dbReference type="NCBIfam" id="NF002378">
    <property type="entry name" value="PRK01372.1"/>
    <property type="match status" value="1"/>
</dbReference>
<dbReference type="PANTHER" id="PTHR23132">
    <property type="entry name" value="D-ALANINE--D-ALANINE LIGASE"/>
    <property type="match status" value="1"/>
</dbReference>
<dbReference type="PANTHER" id="PTHR23132:SF23">
    <property type="entry name" value="D-ALANINE--D-ALANINE LIGASE B"/>
    <property type="match status" value="1"/>
</dbReference>
<dbReference type="Pfam" id="PF07478">
    <property type="entry name" value="Dala_Dala_lig_C"/>
    <property type="match status" value="1"/>
</dbReference>
<dbReference type="Pfam" id="PF01820">
    <property type="entry name" value="Dala_Dala_lig_N"/>
    <property type="match status" value="1"/>
</dbReference>
<dbReference type="PIRSF" id="PIRSF039102">
    <property type="entry name" value="Ddl/VanB"/>
    <property type="match status" value="1"/>
</dbReference>
<dbReference type="SUPFAM" id="SSF56059">
    <property type="entry name" value="Glutathione synthetase ATP-binding domain-like"/>
    <property type="match status" value="1"/>
</dbReference>
<dbReference type="SUPFAM" id="SSF52440">
    <property type="entry name" value="PreATP-grasp domain"/>
    <property type="match status" value="1"/>
</dbReference>
<dbReference type="PROSITE" id="PS50975">
    <property type="entry name" value="ATP_GRASP"/>
    <property type="match status" value="1"/>
</dbReference>
<dbReference type="PROSITE" id="PS00843">
    <property type="entry name" value="DALA_DALA_LIGASE_1"/>
    <property type="match status" value="1"/>
</dbReference>
<dbReference type="PROSITE" id="PS00844">
    <property type="entry name" value="DALA_DALA_LIGASE_2"/>
    <property type="match status" value="1"/>
</dbReference>
<evidence type="ECO:0000250" key="1"/>
<evidence type="ECO:0000255" key="2">
    <source>
        <dbReference type="HAMAP-Rule" id="MF_00047"/>
    </source>
</evidence>
<comment type="function">
    <text evidence="2">Cell wall formation.</text>
</comment>
<comment type="catalytic activity">
    <reaction evidence="2">
        <text>2 D-alanine + ATP = D-alanyl-D-alanine + ADP + phosphate + H(+)</text>
        <dbReference type="Rhea" id="RHEA:11224"/>
        <dbReference type="ChEBI" id="CHEBI:15378"/>
        <dbReference type="ChEBI" id="CHEBI:30616"/>
        <dbReference type="ChEBI" id="CHEBI:43474"/>
        <dbReference type="ChEBI" id="CHEBI:57416"/>
        <dbReference type="ChEBI" id="CHEBI:57822"/>
        <dbReference type="ChEBI" id="CHEBI:456216"/>
        <dbReference type="EC" id="6.3.2.4"/>
    </reaction>
</comment>
<comment type="cofactor">
    <cofactor evidence="1">
        <name>Mg(2+)</name>
        <dbReference type="ChEBI" id="CHEBI:18420"/>
    </cofactor>
    <cofactor evidence="1">
        <name>Mn(2+)</name>
        <dbReference type="ChEBI" id="CHEBI:29035"/>
    </cofactor>
    <text evidence="1">Binds 2 magnesium or manganese ions per subunit.</text>
</comment>
<comment type="pathway">
    <text evidence="2">Cell wall biogenesis; peptidoglycan biosynthesis.</text>
</comment>
<comment type="subcellular location">
    <subcellularLocation>
        <location evidence="2">Cytoplasm</location>
    </subcellularLocation>
</comment>
<comment type="similarity">
    <text evidence="2">Belongs to the D-alanine--D-alanine ligase family.</text>
</comment>
<feature type="chain" id="PRO_1000030522" description="D-alanine--D-alanine ligase">
    <location>
        <begin position="1"/>
        <end position="306"/>
    </location>
</feature>
<feature type="domain" description="ATP-grasp" evidence="2">
    <location>
        <begin position="101"/>
        <end position="303"/>
    </location>
</feature>
<feature type="binding site" evidence="2">
    <location>
        <begin position="134"/>
        <end position="189"/>
    </location>
    <ligand>
        <name>ATP</name>
        <dbReference type="ChEBI" id="CHEBI:30616"/>
    </ligand>
</feature>
<feature type="binding site" evidence="2">
    <location>
        <position position="257"/>
    </location>
    <ligand>
        <name>Mg(2+)</name>
        <dbReference type="ChEBI" id="CHEBI:18420"/>
        <label>1</label>
    </ligand>
</feature>
<feature type="binding site" evidence="2">
    <location>
        <position position="270"/>
    </location>
    <ligand>
        <name>Mg(2+)</name>
        <dbReference type="ChEBI" id="CHEBI:18420"/>
        <label>1</label>
    </ligand>
</feature>
<feature type="binding site" evidence="2">
    <location>
        <position position="270"/>
    </location>
    <ligand>
        <name>Mg(2+)</name>
        <dbReference type="ChEBI" id="CHEBI:18420"/>
        <label>2</label>
    </ligand>
</feature>
<feature type="binding site" evidence="2">
    <location>
        <position position="272"/>
    </location>
    <ligand>
        <name>Mg(2+)</name>
        <dbReference type="ChEBI" id="CHEBI:18420"/>
        <label>2</label>
    </ligand>
</feature>
<organism>
    <name type="scientific">Yersinia pestis (strain Pestoides F)</name>
    <dbReference type="NCBI Taxonomy" id="386656"/>
    <lineage>
        <taxon>Bacteria</taxon>
        <taxon>Pseudomonadati</taxon>
        <taxon>Pseudomonadota</taxon>
        <taxon>Gammaproteobacteria</taxon>
        <taxon>Enterobacterales</taxon>
        <taxon>Yersiniaceae</taxon>
        <taxon>Yersinia</taxon>
    </lineage>
</organism>
<protein>
    <recommendedName>
        <fullName evidence="2">D-alanine--D-alanine ligase</fullName>
        <ecNumber evidence="2">6.3.2.4</ecNumber>
    </recommendedName>
    <alternativeName>
        <fullName evidence="2">D-Ala-D-Ala ligase</fullName>
    </alternativeName>
    <alternativeName>
        <fullName evidence="2">D-alanylalanine synthetase</fullName>
    </alternativeName>
</protein>
<accession>A4TQ81</accession>
<proteinExistence type="inferred from homology"/>
<reference key="1">
    <citation type="submission" date="2007-02" db="EMBL/GenBank/DDBJ databases">
        <title>Complete sequence of chromosome of Yersinia pestis Pestoides F.</title>
        <authorList>
            <consortium name="US DOE Joint Genome Institute"/>
            <person name="Copeland A."/>
            <person name="Lucas S."/>
            <person name="Lapidus A."/>
            <person name="Barry K."/>
            <person name="Detter J.C."/>
            <person name="Glavina del Rio T."/>
            <person name="Hammon N."/>
            <person name="Israni S."/>
            <person name="Dalin E."/>
            <person name="Tice H."/>
            <person name="Pitluck S."/>
            <person name="Di Bartolo G."/>
            <person name="Chain P."/>
            <person name="Malfatti S."/>
            <person name="Shin M."/>
            <person name="Vergez L."/>
            <person name="Schmutz J."/>
            <person name="Larimer F."/>
            <person name="Land M."/>
            <person name="Hauser L."/>
            <person name="Worsham P."/>
            <person name="Chu M."/>
            <person name="Bearden S."/>
            <person name="Garcia E."/>
            <person name="Richardson P."/>
        </authorList>
    </citation>
    <scope>NUCLEOTIDE SEQUENCE [LARGE SCALE GENOMIC DNA]</scope>
    <source>
        <strain>Pestoides F</strain>
    </source>
</reference>
<name>DDL_YERPP</name>
<keyword id="KW-0067">ATP-binding</keyword>
<keyword id="KW-0133">Cell shape</keyword>
<keyword id="KW-0961">Cell wall biogenesis/degradation</keyword>
<keyword id="KW-0963">Cytoplasm</keyword>
<keyword id="KW-0436">Ligase</keyword>
<keyword id="KW-0460">Magnesium</keyword>
<keyword id="KW-0464">Manganese</keyword>
<keyword id="KW-0479">Metal-binding</keyword>
<keyword id="KW-0547">Nucleotide-binding</keyword>
<keyword id="KW-0573">Peptidoglycan synthesis</keyword>
<sequence length="306" mass="33150">MAEKVAVLLGGTSAEREVSLLSGQAVLAGLKEAGIDAYGVDTKDFPVTQLKEQGFDKVFIALHGRGGEDGTLQGVLEFLQLPYTGSGVMASALTMDKLRTKLVWQALGLPISPYVALNRQQFETLSPEELVACVAKLGLPLIVKPSHEGSSVGMSKVDHASELQKALVEAFQHDSDVLIEKWLSGPEFTVAILGDEVLPSIRIQPPGVFYDYDAKYLSDKTQYFCPSGLSDESEQQLAALALQAYHALDCSGWGRVDVMQDRDGHFYLLEVNTSPGMTSHSLVPMAARQYGLSFSQLVARILMLAD</sequence>
<gene>
    <name evidence="2" type="primary">ddl</name>
    <name type="ordered locus">YPDSF_3085</name>
</gene>